<evidence type="ECO:0000250" key="1">
    <source>
        <dbReference type="UniProtKB" id="Q5VSB5"/>
    </source>
</evidence>
<evidence type="ECO:0000255" key="2"/>
<evidence type="ECO:0000269" key="3">
    <source>
    </source>
</evidence>
<evidence type="ECO:0000269" key="4">
    <source>
    </source>
</evidence>
<evidence type="ECO:0000303" key="5">
    <source>
    </source>
</evidence>
<evidence type="ECO:0000305" key="6"/>
<evidence type="ECO:0000312" key="7">
    <source>
        <dbReference type="EMBL" id="BAS77575.1"/>
    </source>
</evidence>
<evidence type="ECO:0000312" key="8">
    <source>
        <dbReference type="EMBL" id="EAZ22179.1"/>
    </source>
</evidence>
<name>CDT4_ORYSJ</name>
<keyword id="KW-1003">Cell membrane</keyword>
<keyword id="KW-0134">Cell wall</keyword>
<keyword id="KW-0472">Membrane</keyword>
<keyword id="KW-0479">Metal-binding</keyword>
<keyword id="KW-1185">Reference proteome</keyword>
<keyword id="KW-0964">Secreted</keyword>
<keyword id="KW-0346">Stress response</keyword>
<keyword id="KW-0812">Transmembrane</keyword>
<keyword id="KW-1133">Transmembrane helix</keyword>
<sequence length="60" mass="6974">MDEPSQGGDQKLSAMEHVKKRHEEKGFLYACLFMLCCCFCCYETCEHCLECFCCCCKKDN</sequence>
<comment type="function">
    <text evidence="4">Confers resistance to heavy metal ions (e.g. aluminium (Al)) by chelating them at the plasma membrane of root cells, thus stopping their entry and reducing their accumulation.</text>
</comment>
<comment type="subcellular location">
    <subcellularLocation>
        <location evidence="1">Cell membrane</location>
        <topology evidence="2">Single-pass membrane protein</topology>
    </subcellularLocation>
    <subcellularLocation>
        <location evidence="1">Secreted</location>
        <location evidence="1">Cell wall</location>
    </subcellularLocation>
</comment>
<comment type="tissue specificity">
    <text evidence="3">Mainly expressed in shoots, and, to a lower extent, in roots.</text>
</comment>
<comment type="induction">
    <text evidence="3">Down-regulated in root tissues but up-regulated in shoot tissues in response to cadmium (CdCl(2)).</text>
</comment>
<comment type="similarity">
    <text evidence="6">Belongs to the CYSTM1 family.</text>
</comment>
<comment type="sequence caution" evidence="6">
    <conflict type="frameshift">
        <sequence resource="EMBL-CDS" id="BAG87062"/>
    </conflict>
</comment>
<organism>
    <name type="scientific">Oryza sativa subsp. japonica</name>
    <name type="common">Rice</name>
    <dbReference type="NCBI Taxonomy" id="39947"/>
    <lineage>
        <taxon>Eukaryota</taxon>
        <taxon>Viridiplantae</taxon>
        <taxon>Streptophyta</taxon>
        <taxon>Embryophyta</taxon>
        <taxon>Tracheophyta</taxon>
        <taxon>Spermatophyta</taxon>
        <taxon>Magnoliopsida</taxon>
        <taxon>Liliopsida</taxon>
        <taxon>Poales</taxon>
        <taxon>Poaceae</taxon>
        <taxon>BOP clade</taxon>
        <taxon>Oryzoideae</taxon>
        <taxon>Oryzeae</taxon>
        <taxon>Oryzinae</taxon>
        <taxon>Oryza</taxon>
        <taxon>Oryza sativa</taxon>
    </lineage>
</organism>
<gene>
    <name evidence="5" type="primary">CDT4</name>
    <name evidence="7" type="ordered locus">Os02g0208500</name>
    <name evidence="8" type="ORF">OsJ_05841</name>
    <name evidence="7" type="ORF">OSNPB_020208500</name>
</gene>
<feature type="chain" id="PRO_0000454818" description="Protein CADMIUM TOLERANCE 4">
    <location>
        <begin position="1"/>
        <end position="60"/>
    </location>
</feature>
<feature type="transmembrane region" description="Helical" evidence="2">
    <location>
        <begin position="26"/>
        <end position="42"/>
    </location>
</feature>
<accession>A3A4E0</accession>
<accession>A0A0P0VG95</accession>
<accession>B7E3W5</accession>
<dbReference type="EMBL" id="AP008208">
    <property type="protein sequence ID" value="BAH91578.1"/>
    <property type="molecule type" value="Genomic_DNA"/>
</dbReference>
<dbReference type="EMBL" id="AP014958">
    <property type="protein sequence ID" value="BAS77575.1"/>
    <property type="molecule type" value="Genomic_DNA"/>
</dbReference>
<dbReference type="EMBL" id="CM000139">
    <property type="protein sequence ID" value="EAZ22179.1"/>
    <property type="molecule type" value="Genomic_DNA"/>
</dbReference>
<dbReference type="EMBL" id="AK059641">
    <property type="protein sequence ID" value="BAG87062.1"/>
    <property type="status" value="ALT_FRAME"/>
    <property type="molecule type" value="mRNA"/>
</dbReference>
<dbReference type="FunCoup" id="A3A4E0">
    <property type="interactions" value="2"/>
</dbReference>
<dbReference type="PaxDb" id="39947-A3A4E0"/>
<dbReference type="EnsemblPlants" id="Os02t0208500-01">
    <property type="protein sequence ID" value="Os02t0208500-01"/>
    <property type="gene ID" value="Os02g0208500"/>
</dbReference>
<dbReference type="Gramene" id="Os02t0208500-01">
    <property type="protein sequence ID" value="Os02t0208500-01"/>
    <property type="gene ID" value="Os02g0208500"/>
</dbReference>
<dbReference type="KEGG" id="dosa:Os02g0208500"/>
<dbReference type="eggNOG" id="ENOG502R5EE">
    <property type="taxonomic scope" value="Eukaryota"/>
</dbReference>
<dbReference type="HOGENOM" id="CLU_156676_2_0_1"/>
<dbReference type="InParanoid" id="A3A4E0"/>
<dbReference type="OMA" id="SERTCCC"/>
<dbReference type="Proteomes" id="UP000000763">
    <property type="component" value="Chromosome 2"/>
</dbReference>
<dbReference type="Proteomes" id="UP000007752">
    <property type="component" value="Chromosome 2"/>
</dbReference>
<dbReference type="Proteomes" id="UP000059680">
    <property type="component" value="Chromosome 2"/>
</dbReference>
<dbReference type="GO" id="GO:0005576">
    <property type="term" value="C:extracellular region"/>
    <property type="evidence" value="ECO:0007669"/>
    <property type="project" value="UniProtKB-KW"/>
</dbReference>
<dbReference type="GO" id="GO:0009505">
    <property type="term" value="C:plant-type cell wall"/>
    <property type="evidence" value="ECO:0000250"/>
    <property type="project" value="UniProtKB"/>
</dbReference>
<dbReference type="GO" id="GO:0005886">
    <property type="term" value="C:plasma membrane"/>
    <property type="evidence" value="ECO:0000250"/>
    <property type="project" value="UniProtKB"/>
</dbReference>
<dbReference type="GO" id="GO:0046872">
    <property type="term" value="F:metal ion binding"/>
    <property type="evidence" value="ECO:0000250"/>
    <property type="project" value="UniProtKB"/>
</dbReference>
<dbReference type="GO" id="GO:0140487">
    <property type="term" value="F:metal ion sequestering activity"/>
    <property type="evidence" value="ECO:0000250"/>
    <property type="project" value="UniProtKB"/>
</dbReference>
<dbReference type="GO" id="GO:1990748">
    <property type="term" value="P:cellular detoxification"/>
    <property type="evidence" value="ECO:0000250"/>
    <property type="project" value="UniProtKB"/>
</dbReference>
<dbReference type="GO" id="GO:0140982">
    <property type="term" value="P:detoxification of aluminum ion"/>
    <property type="evidence" value="ECO:0000314"/>
    <property type="project" value="UniProtKB"/>
</dbReference>
<dbReference type="GO" id="GO:0071585">
    <property type="term" value="P:detoxification of cadmium ion"/>
    <property type="evidence" value="ECO:0000250"/>
    <property type="project" value="UniProtKB"/>
</dbReference>
<dbReference type="GO" id="GO:0010273">
    <property type="term" value="P:detoxification of copper ion"/>
    <property type="evidence" value="ECO:0000250"/>
    <property type="project" value="UniProtKB"/>
</dbReference>
<dbReference type="GO" id="GO:0010044">
    <property type="term" value="P:response to aluminum ion"/>
    <property type="evidence" value="ECO:0000314"/>
    <property type="project" value="UniProtKB"/>
</dbReference>
<dbReference type="GO" id="GO:0046686">
    <property type="term" value="P:response to cadmium ion"/>
    <property type="evidence" value="ECO:0000270"/>
    <property type="project" value="UniProtKB"/>
</dbReference>
<dbReference type="InterPro" id="IPR051671">
    <property type="entry name" value="CYSTM1_HM_Tolerance"/>
</dbReference>
<dbReference type="InterPro" id="IPR028144">
    <property type="entry name" value="CYSTM_dom"/>
</dbReference>
<dbReference type="PANTHER" id="PTHR35470">
    <property type="entry name" value="CADMIUM TOLERANT 3"/>
    <property type="match status" value="1"/>
</dbReference>
<dbReference type="PANTHER" id="PTHR35470:SF7">
    <property type="entry name" value="PROTEIN CADMIUM TOLERANCE 4"/>
    <property type="match status" value="1"/>
</dbReference>
<dbReference type="Pfam" id="PF12734">
    <property type="entry name" value="CYSTM"/>
    <property type="match status" value="1"/>
</dbReference>
<proteinExistence type="evidence at transcript level"/>
<protein>
    <recommendedName>
        <fullName evidence="5">Protein CADMIUM TOLERANCE 4</fullName>
        <shortName evidence="5">Cd tolerant 4</shortName>
        <shortName evidence="5">OsCDT4</shortName>
    </recommendedName>
</protein>
<reference key="1">
    <citation type="journal article" date="2005" name="Nature">
        <title>The map-based sequence of the rice genome.</title>
        <authorList>
            <consortium name="International rice genome sequencing project (IRGSP)"/>
        </authorList>
    </citation>
    <scope>NUCLEOTIDE SEQUENCE [LARGE SCALE GENOMIC DNA]</scope>
    <source>
        <strain>cv. Nipponbare</strain>
    </source>
</reference>
<reference key="2">
    <citation type="journal article" date="2008" name="Nucleic Acids Res.">
        <title>The rice annotation project database (RAP-DB): 2008 update.</title>
        <authorList>
            <consortium name="The rice annotation project (RAP)"/>
        </authorList>
    </citation>
    <scope>GENOME REANNOTATION</scope>
    <source>
        <strain>cv. Nipponbare</strain>
    </source>
</reference>
<reference key="3">
    <citation type="journal article" date="2013" name="Rice">
        <title>Improvement of the Oryza sativa Nipponbare reference genome using next generation sequence and optical map data.</title>
        <authorList>
            <person name="Kawahara Y."/>
            <person name="de la Bastide M."/>
            <person name="Hamilton J.P."/>
            <person name="Kanamori H."/>
            <person name="McCombie W.R."/>
            <person name="Ouyang S."/>
            <person name="Schwartz D.C."/>
            <person name="Tanaka T."/>
            <person name="Wu J."/>
            <person name="Zhou S."/>
            <person name="Childs K.L."/>
            <person name="Davidson R.M."/>
            <person name="Lin H."/>
            <person name="Quesada-Ocampo L."/>
            <person name="Vaillancourt B."/>
            <person name="Sakai H."/>
            <person name="Lee S.S."/>
            <person name="Kim J."/>
            <person name="Numa H."/>
            <person name="Itoh T."/>
            <person name="Buell C.R."/>
            <person name="Matsumoto T."/>
        </authorList>
    </citation>
    <scope>GENOME REANNOTATION</scope>
    <source>
        <strain>cv. Nipponbare</strain>
    </source>
</reference>
<reference key="4">
    <citation type="journal article" date="2005" name="PLoS Biol.">
        <title>The genomes of Oryza sativa: a history of duplications.</title>
        <authorList>
            <person name="Yu J."/>
            <person name="Wang J."/>
            <person name="Lin W."/>
            <person name="Li S."/>
            <person name="Li H."/>
            <person name="Zhou J."/>
            <person name="Ni P."/>
            <person name="Dong W."/>
            <person name="Hu S."/>
            <person name="Zeng C."/>
            <person name="Zhang J."/>
            <person name="Zhang Y."/>
            <person name="Li R."/>
            <person name="Xu Z."/>
            <person name="Li S."/>
            <person name="Li X."/>
            <person name="Zheng H."/>
            <person name="Cong L."/>
            <person name="Lin L."/>
            <person name="Yin J."/>
            <person name="Geng J."/>
            <person name="Li G."/>
            <person name="Shi J."/>
            <person name="Liu J."/>
            <person name="Lv H."/>
            <person name="Li J."/>
            <person name="Wang J."/>
            <person name="Deng Y."/>
            <person name="Ran L."/>
            <person name="Shi X."/>
            <person name="Wang X."/>
            <person name="Wu Q."/>
            <person name="Li C."/>
            <person name="Ren X."/>
            <person name="Wang J."/>
            <person name="Wang X."/>
            <person name="Li D."/>
            <person name="Liu D."/>
            <person name="Zhang X."/>
            <person name="Ji Z."/>
            <person name="Zhao W."/>
            <person name="Sun Y."/>
            <person name="Zhang Z."/>
            <person name="Bao J."/>
            <person name="Han Y."/>
            <person name="Dong L."/>
            <person name="Ji J."/>
            <person name="Chen P."/>
            <person name="Wu S."/>
            <person name="Liu J."/>
            <person name="Xiao Y."/>
            <person name="Bu D."/>
            <person name="Tan J."/>
            <person name="Yang L."/>
            <person name="Ye C."/>
            <person name="Zhang J."/>
            <person name="Xu J."/>
            <person name="Zhou Y."/>
            <person name="Yu Y."/>
            <person name="Zhang B."/>
            <person name="Zhuang S."/>
            <person name="Wei H."/>
            <person name="Liu B."/>
            <person name="Lei M."/>
            <person name="Yu H."/>
            <person name="Li Y."/>
            <person name="Xu H."/>
            <person name="Wei S."/>
            <person name="He X."/>
            <person name="Fang L."/>
            <person name="Zhang Z."/>
            <person name="Zhang Y."/>
            <person name="Huang X."/>
            <person name="Su Z."/>
            <person name="Tong W."/>
            <person name="Li J."/>
            <person name="Tong Z."/>
            <person name="Li S."/>
            <person name="Ye J."/>
            <person name="Wang L."/>
            <person name="Fang L."/>
            <person name="Lei T."/>
            <person name="Chen C.-S."/>
            <person name="Chen H.-C."/>
            <person name="Xu Z."/>
            <person name="Li H."/>
            <person name="Huang H."/>
            <person name="Zhang F."/>
            <person name="Xu H."/>
            <person name="Li N."/>
            <person name="Zhao C."/>
            <person name="Li S."/>
            <person name="Dong L."/>
            <person name="Huang Y."/>
            <person name="Li L."/>
            <person name="Xi Y."/>
            <person name="Qi Q."/>
            <person name="Li W."/>
            <person name="Zhang B."/>
            <person name="Hu W."/>
            <person name="Zhang Y."/>
            <person name="Tian X."/>
            <person name="Jiao Y."/>
            <person name="Liang X."/>
            <person name="Jin J."/>
            <person name="Gao L."/>
            <person name="Zheng W."/>
            <person name="Hao B."/>
            <person name="Liu S.-M."/>
            <person name="Wang W."/>
            <person name="Yuan L."/>
            <person name="Cao M."/>
            <person name="McDermott J."/>
            <person name="Samudrala R."/>
            <person name="Wang J."/>
            <person name="Wong G.K.-S."/>
            <person name="Yang H."/>
        </authorList>
    </citation>
    <scope>NUCLEOTIDE SEQUENCE [LARGE SCALE GENOMIC DNA]</scope>
    <source>
        <strain>cv. Nipponbare</strain>
    </source>
</reference>
<reference key="5">
    <citation type="journal article" date="2003" name="Science">
        <title>Collection, mapping, and annotation of over 28,000 cDNA clones from japonica rice.</title>
        <authorList>
            <consortium name="The rice full-length cDNA consortium"/>
        </authorList>
    </citation>
    <scope>NUCLEOTIDE SEQUENCE [LARGE SCALE MRNA]</scope>
    <source>
        <strain>cv. Nipponbare</strain>
    </source>
</reference>
<reference key="6">
    <citation type="journal article" date="2009" name="Plant Cell Physiol.">
        <title>Novel cysteine-rich peptides from Digitaria ciliaris and Oryza sativa enhance tolerance to cadmium by limiting its cellular accumulation.</title>
        <authorList>
            <person name="Kuramata M."/>
            <person name="Masuya S."/>
            <person name="Takahashi Y."/>
            <person name="Kitagawa E."/>
            <person name="Inoue C."/>
            <person name="Ishikawa S."/>
            <person name="Youssefian S."/>
            <person name="Kusano T."/>
        </authorList>
    </citation>
    <scope>TISSUE SPECIFICITY</scope>
    <scope>INDUCTION BY CADMIUM</scope>
    <scope>GENE FAMILY</scope>
    <scope>NOMENCLATURE</scope>
</reference>
<reference key="7">
    <citation type="journal article" date="2009" name="Plant Signal. Behav.">
        <title>A novel plant cysteine-rich peptide family conferring cadmium tolerance to yeast and plants.</title>
        <authorList>
            <person name="Matsuda T."/>
            <person name="Kuramata M."/>
            <person name="Takahashi Y."/>
            <person name="Kitagawa E."/>
            <person name="Youssefian S."/>
            <person name="Kusano T."/>
        </authorList>
    </citation>
    <scope>GENE FAMILY</scope>
</reference>
<reference key="8">
    <citation type="journal article" date="2013" name="Plant J.">
        <title>A plasma membrane-localized small peptide is involved in rice aluminium tolerance.</title>
        <authorList>
            <person name="Xia J."/>
            <person name="Yamaji N."/>
            <person name="Ma J.F."/>
        </authorList>
    </citation>
    <scope>FUNCTION</scope>
    <source>
        <strain>cv. Nipponbare</strain>
    </source>
</reference>